<protein>
    <recommendedName>
        <fullName evidence="1">D-alanyl-D-alanine dipeptidase</fullName>
        <shortName evidence="1">D-Ala-D-Ala dipeptidase</shortName>
        <ecNumber evidence="1">3.4.13.22</ecNumber>
    </recommendedName>
</protein>
<reference key="1">
    <citation type="journal article" date="1996" name="DNA Res.">
        <title>Sequence analysis of the genome of the unicellular cyanobacterium Synechocystis sp. strain PCC6803. II. Sequence determination of the entire genome and assignment of potential protein-coding regions.</title>
        <authorList>
            <person name="Kaneko T."/>
            <person name="Sato S."/>
            <person name="Kotani H."/>
            <person name="Tanaka A."/>
            <person name="Asamizu E."/>
            <person name="Nakamura Y."/>
            <person name="Miyajima N."/>
            <person name="Hirosawa M."/>
            <person name="Sugiura M."/>
            <person name="Sasamoto S."/>
            <person name="Kimura T."/>
            <person name="Hosouchi T."/>
            <person name="Matsuno A."/>
            <person name="Muraki A."/>
            <person name="Nakazaki N."/>
            <person name="Naruo K."/>
            <person name="Okumura S."/>
            <person name="Shimpo S."/>
            <person name="Takeuchi C."/>
            <person name="Wada T."/>
            <person name="Watanabe A."/>
            <person name="Yamada M."/>
            <person name="Yasuda M."/>
            <person name="Tabata S."/>
        </authorList>
    </citation>
    <scope>NUCLEOTIDE SEQUENCE [LARGE SCALE GENOMIC DNA]</scope>
    <source>
        <strain>ATCC 27184 / PCC 6803 / Kazusa</strain>
    </source>
</reference>
<reference key="2">
    <citation type="journal article" date="1998" name="Chem. Biol.">
        <title>Homologs of the vancomycin resistance D-Ala-D-Ala dipeptidase VanX in Streptomyces toyocaensis, Escherichia coli and Synechocystis: attributes of catalytic efficiency, stereoselectivity and regulation with implications for function.</title>
        <authorList>
            <person name="Lessard I.A.D."/>
            <person name="Pratt S.D."/>
            <person name="McCafferty D.G."/>
            <person name="Bussiere D.E."/>
            <person name="Hutchins C."/>
            <person name="Wanner B.L."/>
            <person name="Katz L."/>
            <person name="Walsh C.T."/>
        </authorList>
    </citation>
    <scope>FUNCTION</scope>
    <scope>CATALYTIC ACTIVITY</scope>
    <scope>COFACTOR</scope>
    <scope>BIOPHYSICOCHEMICAL PROPERTIES</scope>
    <scope>SUBCELLULAR LOCATION</scope>
    <source>
        <strain>ATCC 27184 / PCC 6803 / Kazusa</strain>
    </source>
</reference>
<gene>
    <name evidence="1" type="primary">ddpX</name>
    <name type="synonym">vanX</name>
    <name type="ordered locus">slr1679</name>
</gene>
<keyword id="KW-0961">Cell wall biogenesis/degradation</keyword>
<keyword id="KW-0963">Cytoplasm</keyword>
<keyword id="KW-0224">Dipeptidase</keyword>
<keyword id="KW-0378">Hydrolase</keyword>
<keyword id="KW-0479">Metal-binding</keyword>
<keyword id="KW-0482">Metalloprotease</keyword>
<keyword id="KW-0645">Protease</keyword>
<keyword id="KW-1185">Reference proteome</keyword>
<keyword id="KW-0862">Zinc</keyword>
<name>DDPX_SYNY3</name>
<sequence>MSFDTPLKPYLAIPIQDCGEPLAPINLEGVKSLKPHPYAQVGADYQGRSPYVLRTGVLKRLDQARLTLADIEPSWEILVFDAYRPIAVQQFMVDHTFAEIVARDGLQGQVLTPEQKENIYHQVYQIWAVPNNNPLTPPPHSTGAALDITLLDDLGQPVDMGGEIDELSARSLPNYYQTVEPNSDRQRKEFEQYQRRRELLNTIMESAGFLRHPGEWWHFSQGDQLWAWQYNQRHPDHQKIAYYGRVE</sequence>
<proteinExistence type="evidence at protein level"/>
<comment type="function">
    <text evidence="1 2">Catalyzes hydrolysis of the D-alanyl-D-alanine dipeptide. May have a role in cell-wall turnover.</text>
</comment>
<comment type="catalytic activity">
    <reaction evidence="1 2">
        <text>D-alanyl-D-alanine + H2O = 2 D-alanine</text>
        <dbReference type="Rhea" id="RHEA:20661"/>
        <dbReference type="ChEBI" id="CHEBI:15377"/>
        <dbReference type="ChEBI" id="CHEBI:57416"/>
        <dbReference type="ChEBI" id="CHEBI:57822"/>
        <dbReference type="EC" id="3.4.13.22"/>
    </reaction>
</comment>
<comment type="cofactor">
    <cofactor evidence="3">
        <name>Zn(2+)</name>
        <dbReference type="ChEBI" id="CHEBI:29105"/>
    </cofactor>
    <text evidence="3">Binds 1 zinc ion per subunit.</text>
</comment>
<comment type="biophysicochemical properties">
    <kinetics>
        <KM evidence="2">1.6 mM for D-Ala-D-Ala</KM>
        <KM evidence="2">8.3 mM for L-Ala-D-Ala</KM>
        <text>kcat is 310 sec(-1) with D-Ala-D-Ala. kcat is 110 sec(-1) with L-Ala-D-Ala.</text>
    </kinetics>
</comment>
<comment type="subcellular location">
    <subcellularLocation>
        <location evidence="3">Cytoplasm</location>
    </subcellularLocation>
</comment>
<comment type="similarity">
    <text evidence="1">Belongs to the peptidase M15D family.</text>
</comment>
<accession>P74268</accession>
<evidence type="ECO:0000255" key="1">
    <source>
        <dbReference type="HAMAP-Rule" id="MF_01924"/>
    </source>
</evidence>
<evidence type="ECO:0000269" key="2">
    <source>
    </source>
</evidence>
<evidence type="ECO:0000305" key="3">
    <source>
    </source>
</evidence>
<feature type="chain" id="PRO_0000217838" description="D-alanyl-D-alanine dipeptidase">
    <location>
        <begin position="1"/>
        <end position="247"/>
    </location>
</feature>
<feature type="active site" description="Proton donor/acceptor" evidence="1">
    <location>
        <position position="215"/>
    </location>
</feature>
<feature type="binding site" evidence="1">
    <location>
        <position position="140"/>
    </location>
    <ligand>
        <name>Zn(2+)</name>
        <dbReference type="ChEBI" id="CHEBI:29105"/>
        <note>catalytic</note>
    </ligand>
</feature>
<feature type="binding site" evidence="1">
    <location>
        <position position="147"/>
    </location>
    <ligand>
        <name>Zn(2+)</name>
        <dbReference type="ChEBI" id="CHEBI:29105"/>
        <note>catalytic</note>
    </ligand>
</feature>
<feature type="binding site" evidence="1">
    <location>
        <position position="218"/>
    </location>
    <ligand>
        <name>Zn(2+)</name>
        <dbReference type="ChEBI" id="CHEBI:29105"/>
        <note>catalytic</note>
    </ligand>
</feature>
<feature type="site" description="Transition state stabilizer" evidence="1">
    <location>
        <position position="84"/>
    </location>
</feature>
<dbReference type="EC" id="3.4.13.22" evidence="1"/>
<dbReference type="EMBL" id="BA000022">
    <property type="protein sequence ID" value="BAA18362.1"/>
    <property type="molecule type" value="Genomic_DNA"/>
</dbReference>
<dbReference type="PIR" id="S75903">
    <property type="entry name" value="S75903"/>
</dbReference>
<dbReference type="SMR" id="P74268"/>
<dbReference type="STRING" id="1148.gene:10499238"/>
<dbReference type="PaxDb" id="1148-1653448"/>
<dbReference type="EnsemblBacteria" id="BAA18362">
    <property type="protein sequence ID" value="BAA18362"/>
    <property type="gene ID" value="BAA18362"/>
</dbReference>
<dbReference type="KEGG" id="syn:slr1679"/>
<dbReference type="eggNOG" id="COG2173">
    <property type="taxonomic scope" value="Bacteria"/>
</dbReference>
<dbReference type="InParanoid" id="P74268"/>
<dbReference type="PhylomeDB" id="P74268"/>
<dbReference type="Proteomes" id="UP000001425">
    <property type="component" value="Chromosome"/>
</dbReference>
<dbReference type="GO" id="GO:0005737">
    <property type="term" value="C:cytoplasm"/>
    <property type="evidence" value="ECO:0007669"/>
    <property type="project" value="UniProtKB-SubCell"/>
</dbReference>
<dbReference type="GO" id="GO:0160237">
    <property type="term" value="F:D-Ala-D-Ala dipeptidase activity"/>
    <property type="evidence" value="ECO:0007669"/>
    <property type="project" value="UniProtKB-EC"/>
</dbReference>
<dbReference type="GO" id="GO:0008237">
    <property type="term" value="F:metallopeptidase activity"/>
    <property type="evidence" value="ECO:0007669"/>
    <property type="project" value="UniProtKB-KW"/>
</dbReference>
<dbReference type="GO" id="GO:0008270">
    <property type="term" value="F:zinc ion binding"/>
    <property type="evidence" value="ECO:0007669"/>
    <property type="project" value="UniProtKB-UniRule"/>
</dbReference>
<dbReference type="GO" id="GO:0071555">
    <property type="term" value="P:cell wall organization"/>
    <property type="evidence" value="ECO:0007669"/>
    <property type="project" value="UniProtKB-KW"/>
</dbReference>
<dbReference type="GO" id="GO:0006508">
    <property type="term" value="P:proteolysis"/>
    <property type="evidence" value="ECO:0007669"/>
    <property type="project" value="UniProtKB-KW"/>
</dbReference>
<dbReference type="CDD" id="cd14843">
    <property type="entry name" value="D-Ala-D-Ala_dipeptidase_like"/>
    <property type="match status" value="1"/>
</dbReference>
<dbReference type="Gene3D" id="3.30.1380.10">
    <property type="match status" value="1"/>
</dbReference>
<dbReference type="HAMAP" id="MF_01924">
    <property type="entry name" value="A_A_dipeptidase"/>
    <property type="match status" value="1"/>
</dbReference>
<dbReference type="InterPro" id="IPR000755">
    <property type="entry name" value="A_A_dipeptidase"/>
</dbReference>
<dbReference type="InterPro" id="IPR009045">
    <property type="entry name" value="Hedgehog_sig/DD-Pept_Zn-bd_sf"/>
</dbReference>
<dbReference type="PANTHER" id="PTHR43126">
    <property type="entry name" value="D-ALANYL-D-ALANINE DIPEPTIDASE"/>
    <property type="match status" value="1"/>
</dbReference>
<dbReference type="PANTHER" id="PTHR43126:SF2">
    <property type="entry name" value="D-ALANYL-D-ALANINE DIPEPTIDASE"/>
    <property type="match status" value="1"/>
</dbReference>
<dbReference type="Pfam" id="PF01427">
    <property type="entry name" value="Peptidase_M15"/>
    <property type="match status" value="1"/>
</dbReference>
<dbReference type="PIRSF" id="PIRSF026671">
    <property type="entry name" value="AA_dipeptidase"/>
    <property type="match status" value="1"/>
</dbReference>
<dbReference type="SUPFAM" id="SSF55166">
    <property type="entry name" value="Hedgehog/DD-peptidase"/>
    <property type="match status" value="1"/>
</dbReference>
<organism>
    <name type="scientific">Synechocystis sp. (strain ATCC 27184 / PCC 6803 / Kazusa)</name>
    <dbReference type="NCBI Taxonomy" id="1111708"/>
    <lineage>
        <taxon>Bacteria</taxon>
        <taxon>Bacillati</taxon>
        <taxon>Cyanobacteriota</taxon>
        <taxon>Cyanophyceae</taxon>
        <taxon>Synechococcales</taxon>
        <taxon>Merismopediaceae</taxon>
        <taxon>Synechocystis</taxon>
    </lineage>
</organism>